<accession>P60575</accession>
<evidence type="ECO:0000250" key="1"/>
<evidence type="ECO:0000250" key="2">
    <source>
        <dbReference type="UniProtKB" id="P25417"/>
    </source>
</evidence>
<evidence type="ECO:0000305" key="3"/>
<gene>
    <name type="primary">CSTB</name>
    <name type="synonym">STFB</name>
</gene>
<organism>
    <name type="scientific">Pan paniscus</name>
    <name type="common">Pygmy chimpanzee</name>
    <name type="synonym">Bonobo</name>
    <dbReference type="NCBI Taxonomy" id="9597"/>
    <lineage>
        <taxon>Eukaryota</taxon>
        <taxon>Metazoa</taxon>
        <taxon>Chordata</taxon>
        <taxon>Craniata</taxon>
        <taxon>Vertebrata</taxon>
        <taxon>Euteleostomi</taxon>
        <taxon>Mammalia</taxon>
        <taxon>Eutheria</taxon>
        <taxon>Euarchontoglires</taxon>
        <taxon>Primates</taxon>
        <taxon>Haplorrhini</taxon>
        <taxon>Catarrhini</taxon>
        <taxon>Hominidae</taxon>
        <taxon>Pan</taxon>
    </lineage>
</organism>
<proteinExistence type="inferred from homology"/>
<reference key="1">
    <citation type="journal article" date="2003" name="Genomics">
        <title>Evolution of the cystatin B gene: implications for the origin of its variable dodecamer tandem repeat in humans.</title>
        <authorList>
            <person name="Osawa M."/>
            <person name="Kaneko M."/>
            <person name="Horiuchi H."/>
            <person name="Kitano T."/>
            <person name="Kawamoto Y."/>
            <person name="Saitou N."/>
            <person name="Umetsu K."/>
        </authorList>
    </citation>
    <scope>NUCLEOTIDE SEQUENCE [GENOMIC DNA]</scope>
</reference>
<name>CYTB_PANPA</name>
<feature type="chain" id="PRO_0000207138" description="Cystatin-B">
    <location>
        <begin position="1"/>
        <end position="98"/>
    </location>
</feature>
<feature type="short sequence motif" description="Secondary area of contact" evidence="1">
    <location>
        <begin position="46"/>
        <end position="50"/>
    </location>
</feature>
<feature type="site" description="Reactive site" evidence="1">
    <location>
        <position position="4"/>
    </location>
</feature>
<feature type="modified residue" description="N-acetylmethionine" evidence="2 3">
    <location>
        <position position="1"/>
    </location>
</feature>
<protein>
    <recommendedName>
        <fullName>Cystatin-B</fullName>
    </recommendedName>
    <alternativeName>
        <fullName>Stefin-B</fullName>
    </alternativeName>
</protein>
<comment type="function">
    <text evidence="1">This is an intracellular thiol proteinase inhibitor. Tightly binding reversible inhibitor of cathepsins L, H and B (By similarity).</text>
</comment>
<comment type="subunit">
    <text evidence="1">Able to form dimers stabilized by noncovalent forces.</text>
</comment>
<comment type="subcellular location">
    <subcellularLocation>
        <location evidence="1">Cytoplasm</location>
    </subcellularLocation>
    <subcellularLocation>
        <location evidence="1">Nucleus</location>
    </subcellularLocation>
</comment>
<comment type="similarity">
    <text evidence="3">Belongs to the cystatin family.</text>
</comment>
<dbReference type="EMBL" id="AB083087">
    <property type="protein sequence ID" value="BAC20306.1"/>
    <property type="molecule type" value="Genomic_DNA"/>
</dbReference>
<dbReference type="RefSeq" id="XP_034803849.1">
    <property type="nucleotide sequence ID" value="XM_034947958.3"/>
</dbReference>
<dbReference type="BMRB" id="P60575"/>
<dbReference type="SMR" id="P60575"/>
<dbReference type="STRING" id="9597.ENSPPAP00000010856"/>
<dbReference type="MEROPS" id="I25.003"/>
<dbReference type="GeneID" id="100980572"/>
<dbReference type="eggNOG" id="ENOG502SF2X">
    <property type="taxonomic scope" value="Eukaryota"/>
</dbReference>
<dbReference type="Proteomes" id="UP000240080">
    <property type="component" value="Unplaced"/>
</dbReference>
<dbReference type="GO" id="GO:0005829">
    <property type="term" value="C:cytosol"/>
    <property type="evidence" value="ECO:0007669"/>
    <property type="project" value="TreeGrafter"/>
</dbReference>
<dbReference type="GO" id="GO:0005634">
    <property type="term" value="C:nucleus"/>
    <property type="evidence" value="ECO:0007669"/>
    <property type="project" value="UniProtKB-SubCell"/>
</dbReference>
<dbReference type="GO" id="GO:0004869">
    <property type="term" value="F:cysteine-type endopeptidase inhibitor activity"/>
    <property type="evidence" value="ECO:0007669"/>
    <property type="project" value="UniProtKB-KW"/>
</dbReference>
<dbReference type="CDD" id="cd00042">
    <property type="entry name" value="CY"/>
    <property type="match status" value="1"/>
</dbReference>
<dbReference type="FunFam" id="3.10.450.10:FF:000001">
    <property type="entry name" value="Cystatin-A"/>
    <property type="match status" value="1"/>
</dbReference>
<dbReference type="Gene3D" id="3.10.450.10">
    <property type="match status" value="1"/>
</dbReference>
<dbReference type="InterPro" id="IPR000010">
    <property type="entry name" value="Cystatin_dom"/>
</dbReference>
<dbReference type="InterPro" id="IPR046350">
    <property type="entry name" value="Cystatin_sf"/>
</dbReference>
<dbReference type="InterPro" id="IPR018073">
    <property type="entry name" value="Prot_inh_cystat_CS"/>
</dbReference>
<dbReference type="InterPro" id="IPR001713">
    <property type="entry name" value="Prot_inh_stefin"/>
</dbReference>
<dbReference type="PANTHER" id="PTHR11414">
    <property type="entry name" value="CYSTATIN FAMILY MEMBER"/>
    <property type="match status" value="1"/>
</dbReference>
<dbReference type="PANTHER" id="PTHR11414:SF22">
    <property type="entry name" value="CYSTATIN-B"/>
    <property type="match status" value="1"/>
</dbReference>
<dbReference type="Pfam" id="PF00031">
    <property type="entry name" value="Cystatin"/>
    <property type="match status" value="1"/>
</dbReference>
<dbReference type="PRINTS" id="PR00295">
    <property type="entry name" value="STEFINA"/>
</dbReference>
<dbReference type="SMART" id="SM00043">
    <property type="entry name" value="CY"/>
    <property type="match status" value="1"/>
</dbReference>
<dbReference type="SUPFAM" id="SSF54403">
    <property type="entry name" value="Cystatin/monellin"/>
    <property type="match status" value="1"/>
</dbReference>
<dbReference type="PROSITE" id="PS00287">
    <property type="entry name" value="CYSTATIN"/>
    <property type="match status" value="1"/>
</dbReference>
<keyword id="KW-0007">Acetylation</keyword>
<keyword id="KW-0963">Cytoplasm</keyword>
<keyword id="KW-0539">Nucleus</keyword>
<keyword id="KW-0646">Protease inhibitor</keyword>
<keyword id="KW-1185">Reference proteome</keyword>
<keyword id="KW-0789">Thiol protease inhibitor</keyword>
<sequence>MMCGAPSATQPATAETQHIADQVRSQLEEKENKKFPVFKAVSFKSQVVAGTNYFIKVHVGDEDFVHLRVFQSLPHENKPLTLSNYQTNKAKHDELTYF</sequence>